<sequence length="389" mass="42816">MVSVSGIRKVQRAEGPATVLAIGTANPPNCIDQSTYADYYFRVTNSEHMTDLKKKFQRICERTQIKNRHMYLTEEILKENPNMCAYKAPSLDAREDMMIREVPRVGKEAATKAIKEWGQPMSKITHLIFCTTSGVALPGVDYELIVLLGLDPCVKRYMMYHQGCFAGGTVLRLAKDLAENNKDARVLIVCSENTAVTFRGPSETDMDSLVGQALFADGAAAIIIGSDPVPEVEKPIFELVSTDQKLVPGSHGAIGGLLREVGLTFYLNKSVPDIISQNINDALNKAFDPLGISDYNSIFWIAHPGGRAILDQVEQKVNLKPEKMKATRDVLSNYGNMSSACVFFIMDLMRKRSLEEGLKTTGEGLDWGVLFGFGPGLTIETVVLRSVAI</sequence>
<comment type="catalytic activity">
    <reaction>
        <text>4-coumaroyl-CoA + 3 malonyl-CoA + 3 H(+) = trans-resveratrol + 4 CO2 + 4 CoA</text>
        <dbReference type="Rhea" id="RHEA:11936"/>
        <dbReference type="ChEBI" id="CHEBI:15378"/>
        <dbReference type="ChEBI" id="CHEBI:16526"/>
        <dbReference type="ChEBI" id="CHEBI:45713"/>
        <dbReference type="ChEBI" id="CHEBI:57287"/>
        <dbReference type="ChEBI" id="CHEBI:57355"/>
        <dbReference type="ChEBI" id="CHEBI:57384"/>
        <dbReference type="EC" id="2.3.1.95"/>
    </reaction>
</comment>
<comment type="pathway">
    <text>Phytoalexin biosynthesis; 3,4',5-trihydroxystilbene biosynthesis; 3,4',5-trihydroxystilbene from trans-4-coumarate: step 2/2.</text>
</comment>
<comment type="subunit">
    <text>Homodimer.</text>
</comment>
<comment type="subcellular location">
    <subcellularLocation>
        <location>Cytoplasm</location>
    </subcellularLocation>
</comment>
<comment type="induction">
    <text>By stress. Experimentally by elicitor of P.megasperma, yeast extract and dilution of cell cultures.</text>
</comment>
<comment type="similarity">
    <text evidence="4">Belongs to the thiolase-like superfamily. Chalcone/stilbene synthases family.</text>
</comment>
<reference key="1">
    <citation type="journal article" date="1990" name="Planta">
        <title>Differential regulation of genes for resveratrol synthase in cell cultures of Arachis hypogaea L.</title>
        <authorList>
            <person name="Lanz T."/>
            <person name="Schroeder G."/>
            <person name="Schroeder J."/>
        </authorList>
    </citation>
    <scope>NUCLEOTIDE SEQUENCE [GENOMIC DNA]</scope>
</reference>
<reference key="2">
    <citation type="journal article" date="1991" name="J. Biol. Chem.">
        <title>The role of cysteines in polyketide synthases. Site-directed mutagenesis of resveratrol and chalcone synthases, two key enzymes in different plant-specific pathways.</title>
        <authorList>
            <person name="Lanz T."/>
            <person name="Tropf S."/>
            <person name="Marner F.-J."/>
            <person name="Schroeder J."/>
            <person name="Schroeder G."/>
        </authorList>
    </citation>
    <scope>ACTIVE SITE</scope>
    <scope>MUTAGENESIS</scope>
</reference>
<evidence type="ECO:0000250" key="1"/>
<evidence type="ECO:0000255" key="2">
    <source>
        <dbReference type="PROSITE-ProRule" id="PRU10023"/>
    </source>
</evidence>
<evidence type="ECO:0000269" key="3">
    <source>
    </source>
</evidence>
<evidence type="ECO:0000305" key="4"/>
<protein>
    <recommendedName>
        <fullName>Stilbene synthase 3</fullName>
        <ecNumber>2.3.1.95</ecNumber>
    </recommendedName>
    <alternativeName>
        <fullName>Resveratrol synthase 3</fullName>
        <shortName>RS3</shortName>
    </alternativeName>
    <alternativeName>
        <fullName>Trihydroxystilbene synthase 3</fullName>
    </alternativeName>
</protein>
<feature type="chain" id="PRO_0000216081" description="Stilbene synthase 3">
    <location>
        <begin position="1"/>
        <end position="389"/>
    </location>
</feature>
<feature type="active site" evidence="2 3">
    <location>
        <position position="164"/>
    </location>
</feature>
<feature type="binding site" evidence="1">
    <location>
        <begin position="55"/>
        <end position="58"/>
    </location>
    <ligand>
        <name>substrate</name>
    </ligand>
</feature>
<feature type="binding site" evidence="1">
    <location>
        <position position="267"/>
    </location>
    <ligand>
        <name>substrate</name>
    </ligand>
</feature>
<feature type="binding site" evidence="1">
    <location>
        <begin position="305"/>
        <end position="307"/>
    </location>
    <ligand>
        <name>substrate</name>
    </ligand>
</feature>
<proteinExistence type="evidence at transcript level"/>
<accession>P51069</accession>
<dbReference type="EC" id="2.3.1.95"/>
<dbReference type="EMBL" id="L00952">
    <property type="protein sequence ID" value="AAA96434.1"/>
    <property type="molecule type" value="Genomic_DNA"/>
</dbReference>
<dbReference type="SMR" id="P51069"/>
<dbReference type="BRENDA" id="2.3.1.95">
    <property type="organism ID" value="404"/>
</dbReference>
<dbReference type="UniPathway" id="UPA00372">
    <property type="reaction ID" value="UER00548"/>
</dbReference>
<dbReference type="GO" id="GO:0005737">
    <property type="term" value="C:cytoplasm"/>
    <property type="evidence" value="ECO:0007669"/>
    <property type="project" value="UniProtKB-SubCell"/>
</dbReference>
<dbReference type="GO" id="GO:0050350">
    <property type="term" value="F:trihydroxystilbene synthase activity"/>
    <property type="evidence" value="ECO:0007669"/>
    <property type="project" value="UniProtKB-EC"/>
</dbReference>
<dbReference type="GO" id="GO:0030639">
    <property type="term" value="P:polyketide biosynthetic process"/>
    <property type="evidence" value="ECO:0007669"/>
    <property type="project" value="TreeGrafter"/>
</dbReference>
<dbReference type="CDD" id="cd00831">
    <property type="entry name" value="CHS_like"/>
    <property type="match status" value="1"/>
</dbReference>
<dbReference type="FunFam" id="3.40.47.10:FF:000014">
    <property type="entry name" value="Chalcone synthase 1"/>
    <property type="match status" value="1"/>
</dbReference>
<dbReference type="FunFam" id="3.40.47.10:FF:000025">
    <property type="entry name" value="Chalcone synthase 2"/>
    <property type="match status" value="1"/>
</dbReference>
<dbReference type="Gene3D" id="3.40.47.10">
    <property type="match status" value="2"/>
</dbReference>
<dbReference type="InterPro" id="IPR012328">
    <property type="entry name" value="Chalcone/stilbene_synt_C"/>
</dbReference>
<dbReference type="InterPro" id="IPR001099">
    <property type="entry name" value="Chalcone/stilbene_synt_N"/>
</dbReference>
<dbReference type="InterPro" id="IPR018088">
    <property type="entry name" value="Chalcone/stilbene_synthase_AS"/>
</dbReference>
<dbReference type="InterPro" id="IPR011141">
    <property type="entry name" value="Polyketide_synthase_type-III"/>
</dbReference>
<dbReference type="InterPro" id="IPR016039">
    <property type="entry name" value="Thiolase-like"/>
</dbReference>
<dbReference type="PANTHER" id="PTHR11877:SF62">
    <property type="entry name" value="CHALCONE SYNTHASE 7"/>
    <property type="match status" value="1"/>
</dbReference>
<dbReference type="PANTHER" id="PTHR11877">
    <property type="entry name" value="HYDROXYMETHYLGLUTARYL-COA SYNTHASE"/>
    <property type="match status" value="1"/>
</dbReference>
<dbReference type="Pfam" id="PF02797">
    <property type="entry name" value="Chal_sti_synt_C"/>
    <property type="match status" value="1"/>
</dbReference>
<dbReference type="Pfam" id="PF00195">
    <property type="entry name" value="Chal_sti_synt_N"/>
    <property type="match status" value="1"/>
</dbReference>
<dbReference type="PIRSF" id="PIRSF000451">
    <property type="entry name" value="PKS_III"/>
    <property type="match status" value="1"/>
</dbReference>
<dbReference type="SUPFAM" id="SSF53901">
    <property type="entry name" value="Thiolase-like"/>
    <property type="match status" value="2"/>
</dbReference>
<dbReference type="PROSITE" id="PS00441">
    <property type="entry name" value="CHALCONE_SYNTH"/>
    <property type="match status" value="1"/>
</dbReference>
<organism>
    <name type="scientific">Arachis hypogaea</name>
    <name type="common">Peanut</name>
    <dbReference type="NCBI Taxonomy" id="3818"/>
    <lineage>
        <taxon>Eukaryota</taxon>
        <taxon>Viridiplantae</taxon>
        <taxon>Streptophyta</taxon>
        <taxon>Embryophyta</taxon>
        <taxon>Tracheophyta</taxon>
        <taxon>Spermatophyta</taxon>
        <taxon>Magnoliopsida</taxon>
        <taxon>eudicotyledons</taxon>
        <taxon>Gunneridae</taxon>
        <taxon>Pentapetalae</taxon>
        <taxon>rosids</taxon>
        <taxon>fabids</taxon>
        <taxon>Fabales</taxon>
        <taxon>Fabaceae</taxon>
        <taxon>Papilionoideae</taxon>
        <taxon>50 kb inversion clade</taxon>
        <taxon>dalbergioids sensu lato</taxon>
        <taxon>Dalbergieae</taxon>
        <taxon>Pterocarpus clade</taxon>
        <taxon>Arachis</taxon>
    </lineage>
</organism>
<keyword id="KW-0012">Acyltransferase</keyword>
<keyword id="KW-0963">Cytoplasm</keyword>
<keyword id="KW-0346">Stress response</keyword>
<keyword id="KW-0808">Transferase</keyword>
<name>THS3_ARAHY</name>